<proteinExistence type="evidence at protein level"/>
<sequence length="333" mass="35494">MGAVWSALLVGGGLAGALILWLLRGDSGAPGKDGGAEPLKDAPPGEAAAPGGGPGGGGSGGLSPEPSDRELVSKAEHLRESNGHLISESKDLGNLTEAQRLQNVGNAREYVPVGKVPDTHSRANSETSRNQSPESRVGEWRLPKGHETAVKVAGSVAEKLPSSSPLMDRAEAASLAQSAGHEDWEVVSRHSSWGSVGLGGSLEASRLSLNQGMDESRNSLVGGGWEVDGKVVSVKPRQVSIQFKVHYSTSTDVQFIAVTGDHESLGGWNTYIPLHYCKDGLWSHSVFLPADTVVEWKFVLVENKEVTRWEECSNRRLQTGHEDKVVHGWWGIH</sequence>
<organism>
    <name type="scientific">Rattus norvegicus</name>
    <name type="common">Rat</name>
    <dbReference type="NCBI Taxonomy" id="10116"/>
    <lineage>
        <taxon>Eukaryota</taxon>
        <taxon>Metazoa</taxon>
        <taxon>Chordata</taxon>
        <taxon>Craniata</taxon>
        <taxon>Vertebrata</taxon>
        <taxon>Euteleostomi</taxon>
        <taxon>Mammalia</taxon>
        <taxon>Eutheria</taxon>
        <taxon>Euarchontoglires</taxon>
        <taxon>Glires</taxon>
        <taxon>Rodentia</taxon>
        <taxon>Myomorpha</taxon>
        <taxon>Muroidea</taxon>
        <taxon>Muridae</taxon>
        <taxon>Murinae</taxon>
        <taxon>Rattus</taxon>
    </lineage>
</organism>
<gene>
    <name evidence="7" type="primary">Stbd1</name>
</gene>
<evidence type="ECO:0000250" key="1">
    <source>
        <dbReference type="UniProtKB" id="O95210"/>
    </source>
</evidence>
<evidence type="ECO:0000250" key="2">
    <source>
        <dbReference type="UniProtKB" id="Q8C7E7"/>
    </source>
</evidence>
<evidence type="ECO:0000255" key="3"/>
<evidence type="ECO:0000255" key="4">
    <source>
        <dbReference type="PROSITE-ProRule" id="PRU00594"/>
    </source>
</evidence>
<evidence type="ECO:0000256" key="5">
    <source>
        <dbReference type="SAM" id="MobiDB-lite"/>
    </source>
</evidence>
<evidence type="ECO:0000269" key="6">
    <source>
    </source>
</evidence>
<evidence type="ECO:0000303" key="7">
    <source>
    </source>
</evidence>
<evidence type="ECO:0000305" key="8"/>
<evidence type="ECO:0007744" key="9">
    <source>
    </source>
</evidence>
<accession>Q5FVN1</accession>
<keyword id="KW-0072">Autophagy</keyword>
<keyword id="KW-0119">Carbohydrate metabolism</keyword>
<keyword id="KW-1003">Cell membrane</keyword>
<keyword id="KW-0256">Endoplasmic reticulum</keyword>
<keyword id="KW-0321">Glycogen metabolism</keyword>
<keyword id="KW-0472">Membrane</keyword>
<keyword id="KW-0597">Phosphoprotein</keyword>
<keyword id="KW-1185">Reference proteome</keyword>
<keyword id="KW-0735">Signal-anchor</keyword>
<keyword id="KW-0812">Transmembrane</keyword>
<keyword id="KW-1133">Transmembrane helix</keyword>
<keyword id="KW-0832">Ubl conjugation</keyword>
<dbReference type="EMBL" id="BC089867">
    <property type="protein sequence ID" value="AAH89867.1"/>
    <property type="molecule type" value="mRNA"/>
</dbReference>
<dbReference type="RefSeq" id="NP_001014010.1">
    <property type="nucleotide sequence ID" value="NM_001013988.1"/>
</dbReference>
<dbReference type="SMR" id="Q5FVN1"/>
<dbReference type="FunCoup" id="Q5FVN1">
    <property type="interactions" value="187"/>
</dbReference>
<dbReference type="IntAct" id="Q5FVN1">
    <property type="interactions" value="1"/>
</dbReference>
<dbReference type="STRING" id="10116.ENSRNOP00000003020"/>
<dbReference type="CAZy" id="CBM20">
    <property type="family name" value="Carbohydrate-Binding Module Family 20"/>
</dbReference>
<dbReference type="iPTMnet" id="Q5FVN1"/>
<dbReference type="PhosphoSitePlus" id="Q5FVN1"/>
<dbReference type="PaxDb" id="10116-ENSRNOP00000003020"/>
<dbReference type="Ensembl" id="ENSRNOT00000119917.1">
    <property type="protein sequence ID" value="ENSRNOP00000078314.1"/>
    <property type="gene ID" value="ENSRNOG00000002218.6"/>
</dbReference>
<dbReference type="GeneID" id="305234"/>
<dbReference type="KEGG" id="rno:305234"/>
<dbReference type="UCSC" id="RGD:1311800">
    <property type="organism name" value="rat"/>
</dbReference>
<dbReference type="AGR" id="RGD:1311800"/>
<dbReference type="CTD" id="8987"/>
<dbReference type="RGD" id="1311800">
    <property type="gene designation" value="Stbd1"/>
</dbReference>
<dbReference type="eggNOG" id="ENOG502SE11">
    <property type="taxonomic scope" value="Eukaryota"/>
</dbReference>
<dbReference type="GeneTree" id="ENSGT00390000007731"/>
<dbReference type="HOGENOM" id="CLU_070592_0_0_1"/>
<dbReference type="InParanoid" id="Q5FVN1"/>
<dbReference type="OMA" id="RADNEDW"/>
<dbReference type="OrthoDB" id="6123450at2759"/>
<dbReference type="PhylomeDB" id="Q5FVN1"/>
<dbReference type="TreeFam" id="TF338505"/>
<dbReference type="Reactome" id="R-RNO-6798695">
    <property type="pathway name" value="Neutrophil degranulation"/>
</dbReference>
<dbReference type="Reactome" id="R-RNO-8980692">
    <property type="pathway name" value="RHOA GTPase cycle"/>
</dbReference>
<dbReference type="Reactome" id="R-RNO-9013404">
    <property type="pathway name" value="RAC2 GTPase cycle"/>
</dbReference>
<dbReference type="Reactome" id="R-RNO-9013405">
    <property type="pathway name" value="RHOD GTPase cycle"/>
</dbReference>
<dbReference type="Reactome" id="R-RNO-9013408">
    <property type="pathway name" value="RHOG GTPase cycle"/>
</dbReference>
<dbReference type="PRO" id="PR:Q5FVN1"/>
<dbReference type="Proteomes" id="UP000002494">
    <property type="component" value="Chromosome 14"/>
</dbReference>
<dbReference type="Bgee" id="ENSRNOG00000002218">
    <property type="expression patterns" value="Expressed in quadriceps femoris and 18 other cell types or tissues"/>
</dbReference>
<dbReference type="GO" id="GO:0005783">
    <property type="term" value="C:endoplasmic reticulum"/>
    <property type="evidence" value="ECO:0000266"/>
    <property type="project" value="RGD"/>
</dbReference>
<dbReference type="GO" id="GO:0005789">
    <property type="term" value="C:endoplasmic reticulum membrane"/>
    <property type="evidence" value="ECO:0007669"/>
    <property type="project" value="UniProtKB-SubCell"/>
</dbReference>
<dbReference type="GO" id="GO:0016020">
    <property type="term" value="C:membrane"/>
    <property type="evidence" value="ECO:0000250"/>
    <property type="project" value="GO_Central"/>
</dbReference>
<dbReference type="GO" id="GO:0048471">
    <property type="term" value="C:perinuclear region of cytoplasm"/>
    <property type="evidence" value="ECO:0000250"/>
    <property type="project" value="GO_Central"/>
</dbReference>
<dbReference type="GO" id="GO:0034045">
    <property type="term" value="C:phagophore assembly site membrane"/>
    <property type="evidence" value="ECO:0007669"/>
    <property type="project" value="UniProtKB-SubCell"/>
</dbReference>
<dbReference type="GO" id="GO:0005886">
    <property type="term" value="C:plasma membrane"/>
    <property type="evidence" value="ECO:0000266"/>
    <property type="project" value="RGD"/>
</dbReference>
<dbReference type="GO" id="GO:0030315">
    <property type="term" value="C:T-tubule"/>
    <property type="evidence" value="ECO:0000266"/>
    <property type="project" value="RGD"/>
</dbReference>
<dbReference type="GO" id="GO:0038024">
    <property type="term" value="F:cargo receptor activity"/>
    <property type="evidence" value="ECO:0000266"/>
    <property type="project" value="RGD"/>
</dbReference>
<dbReference type="GO" id="GO:0019899">
    <property type="term" value="F:enzyme binding"/>
    <property type="evidence" value="ECO:0000266"/>
    <property type="project" value="RGD"/>
</dbReference>
<dbReference type="GO" id="GO:2001069">
    <property type="term" value="F:glycogen binding"/>
    <property type="evidence" value="ECO:0000250"/>
    <property type="project" value="GO_Central"/>
</dbReference>
<dbReference type="GO" id="GO:0030247">
    <property type="term" value="F:polysaccharide binding"/>
    <property type="evidence" value="ECO:0000266"/>
    <property type="project" value="RGD"/>
</dbReference>
<dbReference type="GO" id="GO:2001070">
    <property type="term" value="F:starch binding"/>
    <property type="evidence" value="ECO:0007669"/>
    <property type="project" value="InterPro"/>
</dbReference>
<dbReference type="GO" id="GO:0005980">
    <property type="term" value="P:glycogen catabolic process"/>
    <property type="evidence" value="ECO:0000250"/>
    <property type="project" value="GO_Central"/>
</dbReference>
<dbReference type="GO" id="GO:0061723">
    <property type="term" value="P:glycophagy"/>
    <property type="evidence" value="ECO:0000250"/>
    <property type="project" value="GO_Central"/>
</dbReference>
<dbReference type="GO" id="GO:0046907">
    <property type="term" value="P:intracellular transport"/>
    <property type="evidence" value="ECO:0000266"/>
    <property type="project" value="RGD"/>
</dbReference>
<dbReference type="GO" id="GO:0061753">
    <property type="term" value="P:substrate localization to autophagosome"/>
    <property type="evidence" value="ECO:0000266"/>
    <property type="project" value="RGD"/>
</dbReference>
<dbReference type="CDD" id="cd05813">
    <property type="entry name" value="CBM20_genethonin_1"/>
    <property type="match status" value="1"/>
</dbReference>
<dbReference type="FunFam" id="2.60.40.10:FF:000552">
    <property type="entry name" value="Related to glucoamylase"/>
    <property type="match status" value="1"/>
</dbReference>
<dbReference type="Gene3D" id="2.60.40.10">
    <property type="entry name" value="Immunoglobulins"/>
    <property type="match status" value="1"/>
</dbReference>
<dbReference type="InterPro" id="IPR013784">
    <property type="entry name" value="Carb-bd-like_fold"/>
</dbReference>
<dbReference type="InterPro" id="IPR002044">
    <property type="entry name" value="CBM20"/>
</dbReference>
<dbReference type="InterPro" id="IPR034838">
    <property type="entry name" value="CBM20_genethonin_1"/>
</dbReference>
<dbReference type="InterPro" id="IPR013783">
    <property type="entry name" value="Ig-like_fold"/>
</dbReference>
<dbReference type="PANTHER" id="PTHR15048">
    <property type="entry name" value="STARCH-BINDING DOMAIN-CONTAINING PROTEIN 1"/>
    <property type="match status" value="1"/>
</dbReference>
<dbReference type="PANTHER" id="PTHR15048:SF0">
    <property type="entry name" value="STARCH-BINDING DOMAIN-CONTAINING PROTEIN 1"/>
    <property type="match status" value="1"/>
</dbReference>
<dbReference type="Pfam" id="PF00686">
    <property type="entry name" value="CBM_20"/>
    <property type="match status" value="1"/>
</dbReference>
<dbReference type="SMART" id="SM01065">
    <property type="entry name" value="CBM_2"/>
    <property type="match status" value="1"/>
</dbReference>
<dbReference type="SUPFAM" id="SSF49452">
    <property type="entry name" value="Starch-binding domain-like"/>
    <property type="match status" value="1"/>
</dbReference>
<dbReference type="PROSITE" id="PS51166">
    <property type="entry name" value="CBM20"/>
    <property type="match status" value="1"/>
</dbReference>
<feature type="chain" id="PRO_0000238962" description="Starch-binding domain-containing protein 1">
    <location>
        <begin position="1"/>
        <end position="333"/>
    </location>
</feature>
<feature type="topological domain" description="Extracellular" evidence="3">
    <location>
        <begin position="1"/>
        <end position="6"/>
    </location>
</feature>
<feature type="transmembrane region" description="Helical" evidence="3">
    <location>
        <begin position="7"/>
        <end position="23"/>
    </location>
</feature>
<feature type="topological domain" description="Cytoplasmic" evidence="3">
    <location>
        <begin position="24"/>
        <end position="333"/>
    </location>
</feature>
<feature type="domain" description="CBM20" evidence="4">
    <location>
        <begin position="233"/>
        <end position="332"/>
    </location>
</feature>
<feature type="region of interest" description="Disordered" evidence="5">
    <location>
        <begin position="31"/>
        <end position="73"/>
    </location>
</feature>
<feature type="region of interest" description="Disordered" evidence="5">
    <location>
        <begin position="106"/>
        <end position="139"/>
    </location>
</feature>
<feature type="short sequence motif" description="LIR" evidence="1">
    <location>
        <begin position="181"/>
        <end position="187"/>
    </location>
</feature>
<feature type="compositionally biased region" description="Gly residues" evidence="5">
    <location>
        <begin position="50"/>
        <end position="61"/>
    </location>
</feature>
<feature type="compositionally biased region" description="Polar residues" evidence="5">
    <location>
        <begin position="124"/>
        <end position="134"/>
    </location>
</feature>
<feature type="modified residue" description="Phosphoserine" evidence="9">
    <location>
        <position position="67"/>
    </location>
</feature>
<feature type="modified residue" description="Phosphoserine" evidence="1">
    <location>
        <position position="135"/>
    </location>
</feature>
<feature type="modified residue" description="Phosphoserine" evidence="9">
    <location>
        <position position="162"/>
    </location>
</feature>
<feature type="modified residue" description="Phosphoserine" evidence="1">
    <location>
        <position position="191"/>
    </location>
</feature>
<feature type="modified residue" description="Phosphoserine" evidence="1">
    <location>
        <position position="192"/>
    </location>
</feature>
<feature type="modified residue" description="Phosphoserine" evidence="9">
    <location>
        <position position="201"/>
    </location>
</feature>
<feature type="modified residue" description="Phosphoserine" evidence="2">
    <location>
        <position position="205"/>
    </location>
</feature>
<feature type="modified residue" description="Phosphoserine" evidence="9">
    <location>
        <position position="208"/>
    </location>
</feature>
<feature type="modified residue" description="Phosphoserine" evidence="9">
    <location>
        <position position="216"/>
    </location>
</feature>
<feature type="modified residue" description="Phosphoserine" evidence="9">
    <location>
        <position position="219"/>
    </location>
</feature>
<comment type="function">
    <text evidence="1 6">Acts as a cargo receptor for glycogen. Delivers its cargo to an autophagic pathway called glycophagy, resulting in the transport of glycogen to lysosomes.</text>
</comment>
<comment type="subunit">
    <text evidence="1">Interacts with the ATG8 family proteins GABARAP and GABARAPL1 (By similarity). Interacts with several glycogen-associated proteins, such as GYS2 (liver glycogen synthase), GDE (glycogen debranching enzyme), GBE1 (glycogen branching enzyme 1) and EPM2A (Laforin) (By similarity).</text>
</comment>
<comment type="subcellular location">
    <subcellularLocation>
        <location evidence="6">Preautophagosomal structure membrane</location>
        <topology evidence="1">Single-pass type III membrane protein</topology>
    </subcellularLocation>
    <subcellularLocation>
        <location evidence="1">Endoplasmic reticulum membrane</location>
        <topology evidence="1">Single-pass type III membrane protein</topology>
    </subcellularLocation>
    <subcellularLocation>
        <location evidence="1">Cell membrane</location>
        <location evidence="1">Sarcolemma</location>
        <location evidence="1">T-tubule</location>
    </subcellularLocation>
    <text evidence="1 6">Also detected near the junctional sarcoplasmic reticulum (By similarity). Concentrates at perinuclear structures (PubMed:20810658).</text>
</comment>
<comment type="domain">
    <text evidence="1">The LIR motif (LC3-interacting region) is required for the interaction with the ATG8 family protein GABARAPL1.</text>
</comment>
<comment type="domain">
    <text evidence="6">The C-terminal CBM20 domain is required for the interaction with glycogen.</text>
</comment>
<comment type="PTM">
    <text evidence="1">Ubiquitinated, which leads to proteasomal degradation.</text>
</comment>
<name>STBD1_RAT</name>
<protein>
    <recommendedName>
        <fullName evidence="7">Starch-binding domain-containing protein 1</fullName>
    </recommendedName>
    <alternativeName>
        <fullName evidence="7">Genethonin-1</fullName>
    </alternativeName>
    <alternativeName>
        <fullName evidence="8">Glycophagy cargo receptor stbd1</fullName>
    </alternativeName>
</protein>
<reference key="1">
    <citation type="journal article" date="2004" name="Genome Res.">
        <title>The status, quality, and expansion of the NIH full-length cDNA project: the Mammalian Gene Collection (MGC).</title>
        <authorList>
            <consortium name="The MGC Project Team"/>
        </authorList>
    </citation>
    <scope>NUCLEOTIDE SEQUENCE [LARGE SCALE MRNA]</scope>
    <source>
        <tissue>Liver</tissue>
    </source>
</reference>
<reference key="2">
    <citation type="journal article" date="2010" name="J. Biol. Chem.">
        <title>Starch binding domain-containing protein 1/genethonin 1 is a novel participant in glycogen metabolism.</title>
        <authorList>
            <person name="Jiang S."/>
            <person name="Heller B."/>
            <person name="Tagliabracci V.S."/>
            <person name="Zhai L."/>
            <person name="Irimia J.M."/>
            <person name="DePaoli-Roach A.A."/>
            <person name="Wells C.D."/>
            <person name="Skurat A.V."/>
            <person name="Roach P.J."/>
        </authorList>
    </citation>
    <scope>SUBCELLULAR LOCATION</scope>
    <scope>DOMAIN</scope>
    <scope>GLYCOGEN-BINDING</scope>
    <scope>FUNCTION</scope>
</reference>
<reference key="3">
    <citation type="journal article" date="2012" name="Nat. Commun.">
        <title>Quantitative maps of protein phosphorylation sites across 14 different rat organs and tissues.</title>
        <authorList>
            <person name="Lundby A."/>
            <person name="Secher A."/>
            <person name="Lage K."/>
            <person name="Nordsborg N.B."/>
            <person name="Dmytriyev A."/>
            <person name="Lundby C."/>
            <person name="Olsen J.V."/>
        </authorList>
    </citation>
    <scope>PHOSPHORYLATION [LARGE SCALE ANALYSIS] AT SER-67; SER-162; SER-201; SER-208; SER-216 AND SER-219</scope>
    <scope>IDENTIFICATION BY MASS SPECTROMETRY [LARGE SCALE ANALYSIS]</scope>
</reference>